<proteinExistence type="evidence at protein level"/>
<comment type="function">
    <text evidence="1">Formate dehydrogenase allows E.coli to use formate as major electron donor during anaerobic respiration, when nitrate is used as electron acceptor. Subunit gamma is the cytochrome b556 component of the formate dehydrogenase-N, and also contains a menaquinone reduction site that receives electrons from the beta subunit (FdnH), through its hemes. Formate dehydrogenase-N is part of a system that generates proton motive force, together with the dissimilatory nitrate reductase (Nar).</text>
</comment>
<comment type="cofactor">
    <cofactor evidence="1">
        <name>heme</name>
        <dbReference type="ChEBI" id="CHEBI:30413"/>
    </cofactor>
    <text evidence="1">Binds 2 heme groups per subunit. Heme 1 is located at the cytoplasmic interface, heme 2 is located at the periplasmic interface. Electrons are transferred from the periplasmic to the cytoplasmic heme.</text>
</comment>
<comment type="subunit">
    <text evidence="1">Trimer of heterotrimers, consisting of subunits alpha, beta and gamma.</text>
</comment>
<comment type="subcellular location">
    <subcellularLocation>
        <location evidence="1">Cell inner membrane</location>
        <topology evidence="1">Multi-pass membrane protein</topology>
    </subcellularLocation>
</comment>
<comment type="induction">
    <text evidence="3">By nitrate under anaerobic conditions.</text>
</comment>
<comment type="similarity">
    <text evidence="4">Belongs to the formate dehydrogenase gamma subunit family.</text>
</comment>
<gene>
    <name type="primary">fdnI</name>
    <name type="ordered locus">b1476</name>
    <name type="ordered locus">JW1472</name>
</gene>
<reference key="1">
    <citation type="journal article" date="1991" name="J. Biol. Chem.">
        <title>Nitrate-inducible formate dehydrogenase in Escherichia coli K-12. I. Nucleotide sequence of the fdnGHI operon and evidence that opal (UGA) encodes selenocysteine.</title>
        <authorList>
            <person name="Berg B.L."/>
            <person name="Li J."/>
            <person name="Heider J."/>
            <person name="Stewart V."/>
        </authorList>
    </citation>
    <scope>NUCLEOTIDE SEQUENCE [GENOMIC DNA]</scope>
    <source>
        <strain>K12</strain>
    </source>
</reference>
<reference key="2">
    <citation type="journal article" date="1996" name="DNA Res.">
        <title>A 570-kb DNA sequence of the Escherichia coli K-12 genome corresponding to the 28.0-40.1 min region on the linkage map.</title>
        <authorList>
            <person name="Aiba H."/>
            <person name="Baba T."/>
            <person name="Fujita K."/>
            <person name="Hayashi K."/>
            <person name="Inada T."/>
            <person name="Isono K."/>
            <person name="Itoh T."/>
            <person name="Kasai H."/>
            <person name="Kashimoto K."/>
            <person name="Kimura S."/>
            <person name="Kitakawa M."/>
            <person name="Kitagawa M."/>
            <person name="Makino K."/>
            <person name="Miki T."/>
            <person name="Mizobuchi K."/>
            <person name="Mori H."/>
            <person name="Mori T."/>
            <person name="Motomura K."/>
            <person name="Nakade S."/>
            <person name="Nakamura Y."/>
            <person name="Nashimoto H."/>
            <person name="Nishio Y."/>
            <person name="Oshima T."/>
            <person name="Saito N."/>
            <person name="Sampei G."/>
            <person name="Seki Y."/>
            <person name="Sivasundaram S."/>
            <person name="Tagami H."/>
            <person name="Takeda J."/>
            <person name="Takemoto K."/>
            <person name="Takeuchi Y."/>
            <person name="Wada C."/>
            <person name="Yamamoto Y."/>
            <person name="Horiuchi T."/>
        </authorList>
    </citation>
    <scope>NUCLEOTIDE SEQUENCE [LARGE SCALE GENOMIC DNA]</scope>
    <source>
        <strain>K12 / W3110 / ATCC 27325 / DSM 5911</strain>
    </source>
</reference>
<reference key="3">
    <citation type="journal article" date="1997" name="Science">
        <title>The complete genome sequence of Escherichia coli K-12.</title>
        <authorList>
            <person name="Blattner F.R."/>
            <person name="Plunkett G. III"/>
            <person name="Bloch C.A."/>
            <person name="Perna N.T."/>
            <person name="Burland V."/>
            <person name="Riley M."/>
            <person name="Collado-Vides J."/>
            <person name="Glasner J.D."/>
            <person name="Rode C.K."/>
            <person name="Mayhew G.F."/>
            <person name="Gregor J."/>
            <person name="Davis N.W."/>
            <person name="Kirkpatrick H.A."/>
            <person name="Goeden M.A."/>
            <person name="Rose D.J."/>
            <person name="Mau B."/>
            <person name="Shao Y."/>
        </authorList>
    </citation>
    <scope>NUCLEOTIDE SEQUENCE [LARGE SCALE GENOMIC DNA]</scope>
    <source>
        <strain>K12 / MG1655 / ATCC 47076</strain>
    </source>
</reference>
<reference key="4">
    <citation type="journal article" date="2006" name="Mol. Syst. Biol.">
        <title>Highly accurate genome sequences of Escherichia coli K-12 strains MG1655 and W3110.</title>
        <authorList>
            <person name="Hayashi K."/>
            <person name="Morooka N."/>
            <person name="Yamamoto Y."/>
            <person name="Fujita K."/>
            <person name="Isono K."/>
            <person name="Choi S."/>
            <person name="Ohtsubo E."/>
            <person name="Baba T."/>
            <person name="Wanner B.L."/>
            <person name="Mori H."/>
            <person name="Horiuchi T."/>
        </authorList>
    </citation>
    <scope>NUCLEOTIDE SEQUENCE [LARGE SCALE GENOMIC DNA]</scope>
    <source>
        <strain>K12 / W3110 / ATCC 27325 / DSM 5911</strain>
    </source>
</reference>
<reference key="5">
    <citation type="journal article" date="1990" name="Genetics">
        <title>Structural genes for nitrate-inducible formate dehydrogenase in Escherichia coli K-12.</title>
        <authorList>
            <person name="Berg B.L."/>
            <person name="Stewart V."/>
        </authorList>
    </citation>
    <scope>INDUCTION</scope>
    <source>
        <strain>K12</strain>
    </source>
</reference>
<reference key="6">
    <citation type="journal article" date="2005" name="Science">
        <title>Global topology analysis of the Escherichia coli inner membrane proteome.</title>
        <authorList>
            <person name="Daley D.O."/>
            <person name="Rapp M."/>
            <person name="Granseth E."/>
            <person name="Melen K."/>
            <person name="Drew D."/>
            <person name="von Heijne G."/>
        </authorList>
    </citation>
    <scope>TOPOLOGY [LARGE SCALE ANALYSIS]</scope>
    <source>
        <strain>K12 / MG1655 / ATCC 47076</strain>
    </source>
</reference>
<reference key="7">
    <citation type="journal article" date="2002" name="Science">
        <title>Molecular basis of proton motive force generation: structure of formate dehydrogenase-N.</title>
        <authorList>
            <person name="Jormakka M."/>
            <person name="Tornroth S."/>
            <person name="Byrne B."/>
            <person name="Iwata S."/>
        </authorList>
    </citation>
    <scope>X-RAY CRYSTALLOGRAPHY (1.6 ANGSTROMS) IN COMPLEX WITH ALPHA AND BETA SUBUNITS; HEMES AND QUINONE</scope>
    <scope>FUNCTION</scope>
    <scope>COFACTOR</scope>
    <scope>ELECTRON TRANSFER CHAIN</scope>
    <scope>SUBCELLULAR LOCATION</scope>
    <scope>SUBUNIT</scope>
    <scope>METAL BINDING AT HIS-18; HIS-57; HIS-155 AND HIS-169</scope>
</reference>
<accession>P0AEK7</accession>
<accession>P24185</accession>
<accession>P77513</accession>
<evidence type="ECO:0000269" key="1">
    <source>
    </source>
</evidence>
<evidence type="ECO:0000269" key="2">
    <source>
    </source>
</evidence>
<evidence type="ECO:0000269" key="3">
    <source>
    </source>
</evidence>
<evidence type="ECO:0000305" key="4"/>
<evidence type="ECO:0007829" key="5">
    <source>
        <dbReference type="PDB" id="1KQF"/>
    </source>
</evidence>
<feature type="chain" id="PRO_0000087210" description="Formate dehydrogenase, nitrate-inducible, cytochrome b556(Fdn) subunit">
    <location>
        <begin position="1"/>
        <end position="217"/>
    </location>
</feature>
<feature type="topological domain" description="Cytoplasmic" evidence="2">
    <location>
        <begin position="1"/>
        <end position="11"/>
    </location>
</feature>
<feature type="transmembrane region" description="Helical">
    <location>
        <begin position="12"/>
        <end position="36"/>
    </location>
</feature>
<feature type="topological domain" description="Periplasmic" evidence="2">
    <location>
        <begin position="37"/>
        <end position="52"/>
    </location>
</feature>
<feature type="transmembrane region" description="Helical">
    <location>
        <begin position="53"/>
        <end position="74"/>
    </location>
</feature>
<feature type="topological domain" description="Cytoplasmic" evidence="2">
    <location>
        <begin position="75"/>
        <end position="110"/>
    </location>
</feature>
<feature type="transmembrane region" description="Helical">
    <location>
        <begin position="111"/>
        <end position="134"/>
    </location>
</feature>
<feature type="topological domain" description="Periplasmic" evidence="2">
    <location>
        <begin position="135"/>
        <end position="150"/>
    </location>
</feature>
<feature type="transmembrane region" description="Helical">
    <location>
        <begin position="151"/>
        <end position="175"/>
    </location>
</feature>
<feature type="topological domain" description="Cytoplasmic" evidence="2">
    <location>
        <begin position="176"/>
        <end position="217"/>
    </location>
</feature>
<feature type="binding site" description="axial binding residue">
    <location>
        <position position="18"/>
    </location>
    <ligand>
        <name>heme b</name>
        <dbReference type="ChEBI" id="CHEBI:60344"/>
        <label>1</label>
    </ligand>
    <ligandPart>
        <name>Fe</name>
        <dbReference type="ChEBI" id="CHEBI:18248"/>
    </ligandPart>
</feature>
<feature type="binding site" description="axial binding residue">
    <location>
        <position position="57"/>
    </location>
    <ligand>
        <name>heme b</name>
        <dbReference type="ChEBI" id="CHEBI:60344"/>
        <label>2</label>
    </ligand>
    <ligandPart>
        <name>Fe</name>
        <dbReference type="ChEBI" id="CHEBI:18248"/>
    </ligandPart>
</feature>
<feature type="binding site" description="axial binding residue">
    <location>
        <position position="155"/>
    </location>
    <ligand>
        <name>heme b</name>
        <dbReference type="ChEBI" id="CHEBI:60344"/>
        <label>2</label>
    </ligand>
    <ligandPart>
        <name>Fe</name>
        <dbReference type="ChEBI" id="CHEBI:18248"/>
    </ligandPart>
</feature>
<feature type="binding site">
    <location>
        <position position="169"/>
    </location>
    <ligand>
        <name>a menaquinone</name>
        <dbReference type="ChEBI" id="CHEBI:16374"/>
    </ligand>
</feature>
<feature type="binding site" description="axial binding residue">
    <location>
        <position position="169"/>
    </location>
    <ligand>
        <name>heme b</name>
        <dbReference type="ChEBI" id="CHEBI:60344"/>
        <label>1</label>
    </ligand>
    <ligandPart>
        <name>Fe</name>
        <dbReference type="ChEBI" id="CHEBI:18248"/>
    </ligandPart>
</feature>
<feature type="sequence conflict" description="In Ref. 1." evidence="4" ref="1">
    <original>IILIHAILIHMYMAFWVKGSIKGMIEGKVSRRWAKKHHPRWYREIEKAEAKKESEEGI</original>
    <variation>YHPDPRHPDPYVYGILGERID</variation>
    <location>
        <begin position="160"/>
        <end position="217"/>
    </location>
</feature>
<feature type="strand" evidence="5">
    <location>
        <begin position="4"/>
        <end position="8"/>
    </location>
</feature>
<feature type="helix" evidence="5">
    <location>
        <begin position="12"/>
        <end position="36"/>
    </location>
</feature>
<feature type="helix" evidence="5">
    <location>
        <begin position="41"/>
        <end position="45"/>
    </location>
</feature>
<feature type="helix" evidence="5">
    <location>
        <begin position="50"/>
        <end position="75"/>
    </location>
</feature>
<feature type="helix" evidence="5">
    <location>
        <begin position="76"/>
        <end position="78"/>
    </location>
</feature>
<feature type="helix" evidence="5">
    <location>
        <begin position="83"/>
        <end position="85"/>
    </location>
</feature>
<feature type="helix" evidence="5">
    <location>
        <begin position="86"/>
        <end position="90"/>
    </location>
</feature>
<feature type="helix" evidence="5">
    <location>
        <begin position="92"/>
        <end position="96"/>
    </location>
</feature>
<feature type="helix" evidence="5">
    <location>
        <begin position="100"/>
        <end position="103"/>
    </location>
</feature>
<feature type="helix" evidence="5">
    <location>
        <begin position="111"/>
        <end position="133"/>
    </location>
</feature>
<feature type="turn" evidence="5">
    <location>
        <begin position="136"/>
        <end position="139"/>
    </location>
</feature>
<feature type="helix" evidence="5">
    <location>
        <begin position="140"/>
        <end position="142"/>
    </location>
</feature>
<feature type="helix" evidence="5">
    <location>
        <begin position="145"/>
        <end position="175"/>
    </location>
</feature>
<feature type="helix" evidence="5">
    <location>
        <begin position="179"/>
        <end position="184"/>
    </location>
</feature>
<feature type="strand" evidence="5">
    <location>
        <begin position="187"/>
        <end position="189"/>
    </location>
</feature>
<feature type="helix" evidence="5">
    <location>
        <begin position="190"/>
        <end position="196"/>
    </location>
</feature>
<feature type="helix" evidence="5">
    <location>
        <begin position="198"/>
        <end position="215"/>
    </location>
</feature>
<sequence>MSKSKMIVRTKFIDRACHWTVVICFFLVALSGISFFFPTLQWLTQTFGTPQMGRILHPFFGIAIFVALMFMFVRFVHHNIPDKKDIPWLLNIVEVLKGNEHKVADVGKYNAGQKMMFWSIMSMIFVLLVTGVIIWRPYFAQYFPMQVVRYSLLIHAAAGIILIHAILIHMYMAFWVKGSIKGMIEGKVSRRWAKKHHPRWYREIEKAEAKKESEEGI</sequence>
<dbReference type="EMBL" id="M75029">
    <property type="status" value="NOT_ANNOTATED_CDS"/>
    <property type="molecule type" value="Genomic_DNA"/>
</dbReference>
<dbReference type="EMBL" id="U00096">
    <property type="protein sequence ID" value="AAD13440.1"/>
    <property type="molecule type" value="Genomic_DNA"/>
</dbReference>
<dbReference type="EMBL" id="AP009048">
    <property type="protein sequence ID" value="BAA15125.1"/>
    <property type="molecule type" value="Genomic_DNA"/>
</dbReference>
<dbReference type="PIR" id="G64900">
    <property type="entry name" value="JS0630"/>
</dbReference>
<dbReference type="RefSeq" id="NP_415993.1">
    <property type="nucleotide sequence ID" value="NC_000913.3"/>
</dbReference>
<dbReference type="RefSeq" id="WP_000045648.1">
    <property type="nucleotide sequence ID" value="NZ_STEB01000053.1"/>
</dbReference>
<dbReference type="PDB" id="1KQF">
    <property type="method" value="X-ray"/>
    <property type="resolution" value="1.60 A"/>
    <property type="chains" value="C=1-217"/>
</dbReference>
<dbReference type="PDB" id="1KQG">
    <property type="method" value="X-ray"/>
    <property type="resolution" value="2.80 A"/>
    <property type="chains" value="C=1-217"/>
</dbReference>
<dbReference type="PDBsum" id="1KQF"/>
<dbReference type="PDBsum" id="1KQG"/>
<dbReference type="SMR" id="P0AEK7"/>
<dbReference type="BioGRID" id="4262903">
    <property type="interactions" value="11"/>
</dbReference>
<dbReference type="ComplexPortal" id="CPX-1975">
    <property type="entry name" value="Formate dehydrogenase N complex"/>
</dbReference>
<dbReference type="FunCoup" id="P0AEK7">
    <property type="interactions" value="410"/>
</dbReference>
<dbReference type="IntAct" id="P0AEK7">
    <property type="interactions" value="1"/>
</dbReference>
<dbReference type="STRING" id="511145.b1476"/>
<dbReference type="DrugBank" id="DB07918">
    <property type="generic name" value="2-heptyl-4-hydroxyquinoline N-oxide"/>
</dbReference>
<dbReference type="TCDB" id="5.A.3.2.1">
    <property type="family name" value="the prokaryotic molybdopterin-containing oxidoreductase (pmo) family"/>
</dbReference>
<dbReference type="jPOST" id="P0AEK7"/>
<dbReference type="PaxDb" id="511145-b1476"/>
<dbReference type="EnsemblBacteria" id="AAD13440">
    <property type="protein sequence ID" value="AAD13440"/>
    <property type="gene ID" value="b1476"/>
</dbReference>
<dbReference type="GeneID" id="93775635"/>
<dbReference type="GeneID" id="946038"/>
<dbReference type="KEGG" id="ecj:JW1472"/>
<dbReference type="KEGG" id="eco:b1476"/>
<dbReference type="KEGG" id="ecoc:C3026_08560"/>
<dbReference type="PATRIC" id="fig|1411691.4.peg.791"/>
<dbReference type="EchoBASE" id="EB1211"/>
<dbReference type="eggNOG" id="COG2864">
    <property type="taxonomic scope" value="Bacteria"/>
</dbReference>
<dbReference type="HOGENOM" id="CLU_091368_1_1_6"/>
<dbReference type="InParanoid" id="P0AEK7"/>
<dbReference type="OMA" id="TIMSMIF"/>
<dbReference type="OrthoDB" id="9790598at2"/>
<dbReference type="PhylomeDB" id="P0AEK7"/>
<dbReference type="BioCyc" id="EcoCyc:FDNI-MONOMER"/>
<dbReference type="BioCyc" id="MetaCyc:FDNI-MONOMER"/>
<dbReference type="BRENDA" id="1.17.5.3">
    <property type="organism ID" value="2026"/>
</dbReference>
<dbReference type="EvolutionaryTrace" id="P0AEK7"/>
<dbReference type="PRO" id="PR:P0AEK7"/>
<dbReference type="Proteomes" id="UP000000625">
    <property type="component" value="Chromosome"/>
</dbReference>
<dbReference type="GO" id="GO:0009326">
    <property type="term" value="C:formate dehydrogenase complex"/>
    <property type="evidence" value="ECO:0000314"/>
    <property type="project" value="EcoCyc"/>
</dbReference>
<dbReference type="GO" id="GO:0016020">
    <property type="term" value="C:membrane"/>
    <property type="evidence" value="ECO:0000314"/>
    <property type="project" value="ComplexPortal"/>
</dbReference>
<dbReference type="GO" id="GO:0005886">
    <property type="term" value="C:plasma membrane"/>
    <property type="evidence" value="ECO:0000314"/>
    <property type="project" value="EcoCyc"/>
</dbReference>
<dbReference type="GO" id="GO:0009055">
    <property type="term" value="F:electron transfer activity"/>
    <property type="evidence" value="ECO:0000314"/>
    <property type="project" value="EcoCyc"/>
</dbReference>
<dbReference type="GO" id="GO:0008863">
    <property type="term" value="F:formate dehydrogenase (NAD+) activity"/>
    <property type="evidence" value="ECO:0007669"/>
    <property type="project" value="InterPro"/>
</dbReference>
<dbReference type="GO" id="GO:0036397">
    <property type="term" value="F:formate dehydrogenase (quinone) activity"/>
    <property type="evidence" value="ECO:0000314"/>
    <property type="project" value="EcoCyc"/>
</dbReference>
<dbReference type="GO" id="GO:0020037">
    <property type="term" value="F:heme binding"/>
    <property type="evidence" value="ECO:0000314"/>
    <property type="project" value="EcoCyc"/>
</dbReference>
<dbReference type="GO" id="GO:0046872">
    <property type="term" value="F:metal ion binding"/>
    <property type="evidence" value="ECO:0007669"/>
    <property type="project" value="UniProtKB-KW"/>
</dbReference>
<dbReference type="GO" id="GO:0019645">
    <property type="term" value="P:anaerobic electron transport chain"/>
    <property type="evidence" value="ECO:0000303"/>
    <property type="project" value="ComplexPortal"/>
</dbReference>
<dbReference type="GO" id="GO:0009061">
    <property type="term" value="P:anaerobic respiration"/>
    <property type="evidence" value="ECO:0000270"/>
    <property type="project" value="EcoCyc"/>
</dbReference>
<dbReference type="GO" id="GO:0015944">
    <property type="term" value="P:formate oxidation"/>
    <property type="evidence" value="ECO:0000314"/>
    <property type="project" value="EcoCyc"/>
</dbReference>
<dbReference type="GO" id="GO:0006788">
    <property type="term" value="P:heme oxidation"/>
    <property type="evidence" value="ECO:0000303"/>
    <property type="project" value="ComplexPortal"/>
</dbReference>
<dbReference type="FunFam" id="1.20.950.20:FF:000002">
    <property type="entry name" value="Formate dehydrogenase cytochrome b556 subunit"/>
    <property type="match status" value="1"/>
</dbReference>
<dbReference type="Gene3D" id="1.20.950.20">
    <property type="entry name" value="Transmembrane di-heme cytochromes, Chain C"/>
    <property type="match status" value="1"/>
</dbReference>
<dbReference type="InterPro" id="IPR011577">
    <property type="entry name" value="Cyt_b561_bac/Ni-Hgenase"/>
</dbReference>
<dbReference type="InterPro" id="IPR016174">
    <property type="entry name" value="Di-haem_cyt_TM"/>
</dbReference>
<dbReference type="InterPro" id="IPR051817">
    <property type="entry name" value="FDH_cytochrome_b556_subunit"/>
</dbReference>
<dbReference type="InterPro" id="IPR006471">
    <property type="entry name" value="Formate_DH_gsu"/>
</dbReference>
<dbReference type="NCBIfam" id="TIGR01583">
    <property type="entry name" value="formate-DH-gamm"/>
    <property type="match status" value="1"/>
</dbReference>
<dbReference type="NCBIfam" id="NF007558">
    <property type="entry name" value="PRK10179.1"/>
    <property type="match status" value="1"/>
</dbReference>
<dbReference type="PANTHER" id="PTHR30074">
    <property type="entry name" value="FORMATE DEHYDROGENASE, NITRATE-INDUCIBLE, CYTOCHROME B556 FDN SUBUNIT"/>
    <property type="match status" value="1"/>
</dbReference>
<dbReference type="PANTHER" id="PTHR30074:SF5">
    <property type="entry name" value="FORMATE DEHYDROGENASE, NITRATE-INDUCIBLE, CYTOCHROME B556(FDN) SUBUNIT"/>
    <property type="match status" value="1"/>
</dbReference>
<dbReference type="Pfam" id="PF01292">
    <property type="entry name" value="Ni_hydr_CYTB"/>
    <property type="match status" value="1"/>
</dbReference>
<dbReference type="SUPFAM" id="SSF81342">
    <property type="entry name" value="Transmembrane di-heme cytochromes"/>
    <property type="match status" value="1"/>
</dbReference>
<name>FDNI_ECOLI</name>
<protein>
    <recommendedName>
        <fullName>Formate dehydrogenase, nitrate-inducible, cytochrome b556(Fdn) subunit</fullName>
    </recommendedName>
    <alternativeName>
        <fullName>Anaerobic formate dehydrogenase cytochrome b556 subunit</fullName>
    </alternativeName>
    <alternativeName>
        <fullName>Formate dehydrogenase-N subunit gamma</fullName>
        <shortName>FDH-N subunit gamma</shortName>
    </alternativeName>
</protein>
<organism>
    <name type="scientific">Escherichia coli (strain K12)</name>
    <dbReference type="NCBI Taxonomy" id="83333"/>
    <lineage>
        <taxon>Bacteria</taxon>
        <taxon>Pseudomonadati</taxon>
        <taxon>Pseudomonadota</taxon>
        <taxon>Gammaproteobacteria</taxon>
        <taxon>Enterobacterales</taxon>
        <taxon>Enterobacteriaceae</taxon>
        <taxon>Escherichia</taxon>
    </lineage>
</organism>
<keyword id="KW-0002">3D-structure</keyword>
<keyword id="KW-0997">Cell inner membrane</keyword>
<keyword id="KW-1003">Cell membrane</keyword>
<keyword id="KW-0249">Electron transport</keyword>
<keyword id="KW-0349">Heme</keyword>
<keyword id="KW-0408">Iron</keyword>
<keyword id="KW-0472">Membrane</keyword>
<keyword id="KW-0479">Metal-binding</keyword>
<keyword id="KW-1185">Reference proteome</keyword>
<keyword id="KW-0812">Transmembrane</keyword>
<keyword id="KW-1133">Transmembrane helix</keyword>
<keyword id="KW-0813">Transport</keyword>